<comment type="function">
    <text evidence="1">Involved in the biosynthesis of branched-chain amino acids (BCAA). Catalyzes an alkyl-migration followed by a ketol-acid reduction of (S)-2-acetolactate (S2AL) to yield (R)-2,3-dihydroxy-isovalerate. In the isomerase reaction, S2AL is rearranged via a Mg-dependent methyl migration to produce 3-hydroxy-3-methyl-2-ketobutyrate (HMKB). In the reductase reaction, this 2-ketoacid undergoes a metal-dependent reduction by NADPH to yield (R)-2,3-dihydroxy-isovalerate.</text>
</comment>
<comment type="catalytic activity">
    <reaction evidence="1">
        <text>(2R)-2,3-dihydroxy-3-methylbutanoate + NADP(+) = (2S)-2-acetolactate + NADPH + H(+)</text>
        <dbReference type="Rhea" id="RHEA:22068"/>
        <dbReference type="ChEBI" id="CHEBI:15378"/>
        <dbReference type="ChEBI" id="CHEBI:49072"/>
        <dbReference type="ChEBI" id="CHEBI:57783"/>
        <dbReference type="ChEBI" id="CHEBI:58349"/>
        <dbReference type="ChEBI" id="CHEBI:58476"/>
        <dbReference type="EC" id="1.1.1.86"/>
    </reaction>
</comment>
<comment type="catalytic activity">
    <reaction evidence="1">
        <text>(2R,3R)-2,3-dihydroxy-3-methylpentanoate + NADP(+) = (S)-2-ethyl-2-hydroxy-3-oxobutanoate + NADPH + H(+)</text>
        <dbReference type="Rhea" id="RHEA:13493"/>
        <dbReference type="ChEBI" id="CHEBI:15378"/>
        <dbReference type="ChEBI" id="CHEBI:49256"/>
        <dbReference type="ChEBI" id="CHEBI:49258"/>
        <dbReference type="ChEBI" id="CHEBI:57783"/>
        <dbReference type="ChEBI" id="CHEBI:58349"/>
        <dbReference type="EC" id="1.1.1.86"/>
    </reaction>
</comment>
<comment type="cofactor">
    <cofactor evidence="1">
        <name>Mg(2+)</name>
        <dbReference type="ChEBI" id="CHEBI:18420"/>
    </cofactor>
    <text evidence="1">Binds 2 magnesium ions per subunit.</text>
</comment>
<comment type="pathway">
    <text evidence="1">Amino-acid biosynthesis; L-isoleucine biosynthesis; L-isoleucine from 2-oxobutanoate: step 2/4.</text>
</comment>
<comment type="pathway">
    <text evidence="1">Amino-acid biosynthesis; L-valine biosynthesis; L-valine from pyruvate: step 2/4.</text>
</comment>
<comment type="similarity">
    <text evidence="1">Belongs to the ketol-acid reductoisomerase family.</text>
</comment>
<dbReference type="EC" id="1.1.1.86" evidence="1"/>
<dbReference type="EMBL" id="CP000305">
    <property type="protein sequence ID" value="ABG16410.1"/>
    <property type="molecule type" value="Genomic_DNA"/>
</dbReference>
<dbReference type="EMBL" id="ACNQ01000001">
    <property type="protein sequence ID" value="EEO78514.1"/>
    <property type="molecule type" value="Genomic_DNA"/>
</dbReference>
<dbReference type="RefSeq" id="WP_002212007.1">
    <property type="nucleotide sequence ID" value="NZ_ACNQ01000001.1"/>
</dbReference>
<dbReference type="SMR" id="Q1CNM0"/>
<dbReference type="GeneID" id="57974817"/>
<dbReference type="KEGG" id="ypn:YPN_0077"/>
<dbReference type="HOGENOM" id="CLU_551905_0_0_6"/>
<dbReference type="UniPathway" id="UPA00047">
    <property type="reaction ID" value="UER00056"/>
</dbReference>
<dbReference type="UniPathway" id="UPA00049">
    <property type="reaction ID" value="UER00060"/>
</dbReference>
<dbReference type="Proteomes" id="UP000008936">
    <property type="component" value="Chromosome"/>
</dbReference>
<dbReference type="GO" id="GO:0005829">
    <property type="term" value="C:cytosol"/>
    <property type="evidence" value="ECO:0007669"/>
    <property type="project" value="TreeGrafter"/>
</dbReference>
<dbReference type="GO" id="GO:0004455">
    <property type="term" value="F:ketol-acid reductoisomerase activity"/>
    <property type="evidence" value="ECO:0007669"/>
    <property type="project" value="UniProtKB-UniRule"/>
</dbReference>
<dbReference type="GO" id="GO:0000287">
    <property type="term" value="F:magnesium ion binding"/>
    <property type="evidence" value="ECO:0007669"/>
    <property type="project" value="UniProtKB-UniRule"/>
</dbReference>
<dbReference type="GO" id="GO:0009097">
    <property type="term" value="P:isoleucine biosynthetic process"/>
    <property type="evidence" value="ECO:0007669"/>
    <property type="project" value="UniProtKB-UniRule"/>
</dbReference>
<dbReference type="GO" id="GO:0009099">
    <property type="term" value="P:L-valine biosynthetic process"/>
    <property type="evidence" value="ECO:0007669"/>
    <property type="project" value="UniProtKB-UniRule"/>
</dbReference>
<dbReference type="FunFam" id="1.10.1040.10:FF:000007">
    <property type="entry name" value="Ketol-acid reductoisomerase (NADP(+))"/>
    <property type="match status" value="1"/>
</dbReference>
<dbReference type="FunFam" id="3.40.50.720:FF:000043">
    <property type="entry name" value="Ketol-acid reductoisomerase (NADP(+))"/>
    <property type="match status" value="1"/>
</dbReference>
<dbReference type="Gene3D" id="1.10.1040.10">
    <property type="entry name" value="N-(1-d-carboxylethyl)-l-norvaline Dehydrogenase, domain 2"/>
    <property type="match status" value="1"/>
</dbReference>
<dbReference type="Gene3D" id="3.40.50.720">
    <property type="entry name" value="NAD(P)-binding Rossmann-like Domain"/>
    <property type="match status" value="1"/>
</dbReference>
<dbReference type="HAMAP" id="MF_00435">
    <property type="entry name" value="IlvC"/>
    <property type="match status" value="1"/>
</dbReference>
<dbReference type="InterPro" id="IPR008927">
    <property type="entry name" value="6-PGluconate_DH-like_C_sf"/>
</dbReference>
<dbReference type="InterPro" id="IPR013328">
    <property type="entry name" value="6PGD_dom2"/>
</dbReference>
<dbReference type="InterPro" id="IPR013023">
    <property type="entry name" value="KARI"/>
</dbReference>
<dbReference type="InterPro" id="IPR000506">
    <property type="entry name" value="KARI_C"/>
</dbReference>
<dbReference type="InterPro" id="IPR013116">
    <property type="entry name" value="KARI_N"/>
</dbReference>
<dbReference type="InterPro" id="IPR036291">
    <property type="entry name" value="NAD(P)-bd_dom_sf"/>
</dbReference>
<dbReference type="NCBIfam" id="TIGR00465">
    <property type="entry name" value="ilvC"/>
    <property type="match status" value="1"/>
</dbReference>
<dbReference type="NCBIfam" id="NF003557">
    <property type="entry name" value="PRK05225.1"/>
    <property type="match status" value="1"/>
</dbReference>
<dbReference type="PANTHER" id="PTHR21371">
    <property type="entry name" value="KETOL-ACID REDUCTOISOMERASE, MITOCHONDRIAL"/>
    <property type="match status" value="1"/>
</dbReference>
<dbReference type="PANTHER" id="PTHR21371:SF1">
    <property type="entry name" value="KETOL-ACID REDUCTOISOMERASE, MITOCHONDRIAL"/>
    <property type="match status" value="1"/>
</dbReference>
<dbReference type="Pfam" id="PF01450">
    <property type="entry name" value="KARI_C"/>
    <property type="match status" value="2"/>
</dbReference>
<dbReference type="Pfam" id="PF07991">
    <property type="entry name" value="KARI_N"/>
    <property type="match status" value="1"/>
</dbReference>
<dbReference type="SUPFAM" id="SSF48179">
    <property type="entry name" value="6-phosphogluconate dehydrogenase C-terminal domain-like"/>
    <property type="match status" value="2"/>
</dbReference>
<dbReference type="SUPFAM" id="SSF51735">
    <property type="entry name" value="NAD(P)-binding Rossmann-fold domains"/>
    <property type="match status" value="1"/>
</dbReference>
<dbReference type="PROSITE" id="PS51851">
    <property type="entry name" value="KARI_C"/>
    <property type="match status" value="2"/>
</dbReference>
<dbReference type="PROSITE" id="PS51850">
    <property type="entry name" value="KARI_N"/>
    <property type="match status" value="1"/>
</dbReference>
<reference key="1">
    <citation type="journal article" date="2006" name="J. Bacteriol.">
        <title>Complete genome sequence of Yersinia pestis strains Antiqua and Nepal516: evidence of gene reduction in an emerging pathogen.</title>
        <authorList>
            <person name="Chain P.S.G."/>
            <person name="Hu P."/>
            <person name="Malfatti S.A."/>
            <person name="Radnedge L."/>
            <person name="Larimer F."/>
            <person name="Vergez L.M."/>
            <person name="Worsham P."/>
            <person name="Chu M.C."/>
            <person name="Andersen G.L."/>
        </authorList>
    </citation>
    <scope>NUCLEOTIDE SEQUENCE [LARGE SCALE GENOMIC DNA]</scope>
    <source>
        <strain>Nepal516</strain>
    </source>
</reference>
<reference key="2">
    <citation type="submission" date="2009-04" db="EMBL/GenBank/DDBJ databases">
        <title>Yersinia pestis Nepal516A whole genome shotgun sequencing project.</title>
        <authorList>
            <person name="Plunkett G. III"/>
            <person name="Anderson B.D."/>
            <person name="Baumler D.J."/>
            <person name="Burland V."/>
            <person name="Cabot E.L."/>
            <person name="Glasner J.D."/>
            <person name="Mau B."/>
            <person name="Neeno-Eckwall E."/>
            <person name="Perna N.T."/>
            <person name="Munk A.C."/>
            <person name="Tapia R."/>
            <person name="Green L.D."/>
            <person name="Rogers Y.C."/>
            <person name="Detter J.C."/>
            <person name="Bruce D.C."/>
            <person name="Brettin T.S."/>
        </authorList>
    </citation>
    <scope>NUCLEOTIDE SEQUENCE [LARGE SCALE GENOMIC DNA]</scope>
    <source>
        <strain>Nepal516</strain>
    </source>
</reference>
<sequence>MANYFNTLNLRQQLAQLGKCRFMARDEFADEAGYLKGKKVVIVGCGAQGLNQGLNMRDSGLDVAYALRKEAIAEKRASWRKATENGFKVGTYEELIPQADLVVNLTPDKQHSAVVKAVQPLMKEGAALGYSHGFNIVEVGEQVRKDITVVMVAPKCPGTEVREEYKRGFGVPTLIAVHPENDPKGEGMAIAKAWAAATGGHRAGVLEFSFVAEVKSDLMGEQTILCGMLQAGSLLCFDKLVSEGTDAAYAEKLIQFGWETITEALKQGGITLMMDRLSNPAKLRAYALSEQLKEIMAPLFQKHMDDIISGAFSSGMMADWANDDVKLLNWREETGRTAFENAPQFEGKISEQEYFDHGVLMIAMVKAGVELAFETMVDSGIIEESAYYESLHELPLIANTIARKRLYEMNVVISDTAEYGNYLFANAAVPLLKEKFMDSLQAGDLGKSIPGSAVDNAQLRDVNEAIRNHPIEAVGHKLRGYMTDMKRIAVAG</sequence>
<protein>
    <recommendedName>
        <fullName evidence="1">Ketol-acid reductoisomerase (NADP(+))</fullName>
        <shortName evidence="1">KARI</shortName>
        <ecNumber evidence="1">1.1.1.86</ecNumber>
    </recommendedName>
    <alternativeName>
        <fullName evidence="1">Acetohydroxy-acid isomeroreductase</fullName>
        <shortName evidence="1">AHIR</shortName>
    </alternativeName>
    <alternativeName>
        <fullName evidence="1">Alpha-keto-beta-hydroxylacyl reductoisomerase</fullName>
    </alternativeName>
    <alternativeName>
        <fullName evidence="1">Ketol-acid reductoisomerase type 2</fullName>
    </alternativeName>
    <alternativeName>
        <fullName evidence="1">Ketol-acid reductoisomerase type II</fullName>
    </alternativeName>
</protein>
<organism>
    <name type="scientific">Yersinia pestis bv. Antiqua (strain Nepal516)</name>
    <dbReference type="NCBI Taxonomy" id="377628"/>
    <lineage>
        <taxon>Bacteria</taxon>
        <taxon>Pseudomonadati</taxon>
        <taxon>Pseudomonadota</taxon>
        <taxon>Gammaproteobacteria</taxon>
        <taxon>Enterobacterales</taxon>
        <taxon>Yersiniaceae</taxon>
        <taxon>Yersinia</taxon>
    </lineage>
</organism>
<name>ILVC_YERPN</name>
<keyword id="KW-0028">Amino-acid biosynthesis</keyword>
<keyword id="KW-0100">Branched-chain amino acid biosynthesis</keyword>
<keyword id="KW-0460">Magnesium</keyword>
<keyword id="KW-0479">Metal-binding</keyword>
<keyword id="KW-0521">NADP</keyword>
<keyword id="KW-0560">Oxidoreductase</keyword>
<keyword id="KW-0677">Repeat</keyword>
<feature type="chain" id="PRO_1000050593" description="Ketol-acid reductoisomerase (NADP(+))">
    <location>
        <begin position="1"/>
        <end position="492"/>
    </location>
</feature>
<feature type="domain" description="KARI N-terminal Rossmann" evidence="2">
    <location>
        <begin position="15"/>
        <end position="208"/>
    </location>
</feature>
<feature type="domain" description="KARI C-terminal knotted 1" evidence="3">
    <location>
        <begin position="209"/>
        <end position="344"/>
    </location>
</feature>
<feature type="domain" description="KARI C-terminal knotted 2" evidence="3">
    <location>
        <begin position="345"/>
        <end position="485"/>
    </location>
</feature>
<feature type="active site" evidence="1">
    <location>
        <position position="132"/>
    </location>
</feature>
<feature type="binding site" evidence="1">
    <location>
        <begin position="45"/>
        <end position="48"/>
    </location>
    <ligand>
        <name>NADP(+)</name>
        <dbReference type="ChEBI" id="CHEBI:58349"/>
    </ligand>
</feature>
<feature type="binding site" evidence="1">
    <location>
        <position position="68"/>
    </location>
    <ligand>
        <name>NADP(+)</name>
        <dbReference type="ChEBI" id="CHEBI:58349"/>
    </ligand>
</feature>
<feature type="binding site" evidence="1">
    <location>
        <position position="76"/>
    </location>
    <ligand>
        <name>NADP(+)</name>
        <dbReference type="ChEBI" id="CHEBI:58349"/>
    </ligand>
</feature>
<feature type="binding site" evidence="1">
    <location>
        <position position="78"/>
    </location>
    <ligand>
        <name>NADP(+)</name>
        <dbReference type="ChEBI" id="CHEBI:58349"/>
    </ligand>
</feature>
<feature type="binding site" evidence="1">
    <location>
        <begin position="108"/>
        <end position="110"/>
    </location>
    <ligand>
        <name>NADP(+)</name>
        <dbReference type="ChEBI" id="CHEBI:58349"/>
    </ligand>
</feature>
<feature type="binding site" evidence="1">
    <location>
        <position position="158"/>
    </location>
    <ligand>
        <name>NADP(+)</name>
        <dbReference type="ChEBI" id="CHEBI:58349"/>
    </ligand>
</feature>
<feature type="binding site" evidence="1">
    <location>
        <position position="217"/>
    </location>
    <ligand>
        <name>Mg(2+)</name>
        <dbReference type="ChEBI" id="CHEBI:18420"/>
        <label>1</label>
    </ligand>
</feature>
<feature type="binding site" evidence="1">
    <location>
        <position position="217"/>
    </location>
    <ligand>
        <name>Mg(2+)</name>
        <dbReference type="ChEBI" id="CHEBI:18420"/>
        <label>2</label>
    </ligand>
</feature>
<feature type="binding site" evidence="1">
    <location>
        <position position="221"/>
    </location>
    <ligand>
        <name>Mg(2+)</name>
        <dbReference type="ChEBI" id="CHEBI:18420"/>
        <label>1</label>
    </ligand>
</feature>
<feature type="binding site" evidence="1">
    <location>
        <position position="389"/>
    </location>
    <ligand>
        <name>Mg(2+)</name>
        <dbReference type="ChEBI" id="CHEBI:18420"/>
        <label>2</label>
    </ligand>
</feature>
<feature type="binding site" evidence="1">
    <location>
        <position position="393"/>
    </location>
    <ligand>
        <name>Mg(2+)</name>
        <dbReference type="ChEBI" id="CHEBI:18420"/>
        <label>2</label>
    </ligand>
</feature>
<feature type="binding site" evidence="1">
    <location>
        <position position="414"/>
    </location>
    <ligand>
        <name>substrate</name>
    </ligand>
</feature>
<evidence type="ECO:0000255" key="1">
    <source>
        <dbReference type="HAMAP-Rule" id="MF_00435"/>
    </source>
</evidence>
<evidence type="ECO:0000255" key="2">
    <source>
        <dbReference type="PROSITE-ProRule" id="PRU01197"/>
    </source>
</evidence>
<evidence type="ECO:0000255" key="3">
    <source>
        <dbReference type="PROSITE-ProRule" id="PRU01198"/>
    </source>
</evidence>
<proteinExistence type="inferred from homology"/>
<gene>
    <name evidence="1" type="primary">ilvC</name>
    <name type="ordered locus">YPN_0077</name>
    <name type="ORF">YP516_0026</name>
</gene>
<accession>Q1CNM0</accession>
<accession>D1Q0W0</accession>